<proteinExistence type="inferred from homology"/>
<name>ADRO_SCHPO</name>
<feature type="transit peptide" description="Mitochondrion" evidence="3">
    <location>
        <begin position="1"/>
        <end position="38"/>
    </location>
</feature>
<feature type="chain" id="PRO_0000337259" description="Probable NADPH:adrenodoxin oxidoreductase, mitochondrial">
    <location>
        <begin position="39"/>
        <end position="469"/>
    </location>
</feature>
<feature type="binding site" evidence="1">
    <location>
        <position position="27"/>
    </location>
    <ligand>
        <name>FAD</name>
        <dbReference type="ChEBI" id="CHEBI:57692"/>
    </ligand>
</feature>
<feature type="binding site" evidence="1">
    <location>
        <position position="48"/>
    </location>
    <ligand>
        <name>FAD</name>
        <dbReference type="ChEBI" id="CHEBI:57692"/>
    </ligand>
</feature>
<feature type="binding site" evidence="1">
    <location>
        <position position="56"/>
    </location>
    <ligand>
        <name>FAD</name>
        <dbReference type="ChEBI" id="CHEBI:57692"/>
    </ligand>
</feature>
<feature type="binding site" evidence="1">
    <location>
        <position position="92"/>
    </location>
    <ligand>
        <name>FAD</name>
        <dbReference type="ChEBI" id="CHEBI:57692"/>
    </ligand>
</feature>
<feature type="binding site" evidence="1">
    <location>
        <begin position="164"/>
        <end position="167"/>
    </location>
    <ligand>
        <name>NADP(+)</name>
        <dbReference type="ChEBI" id="CHEBI:58349"/>
    </ligand>
</feature>
<feature type="binding site" evidence="1">
    <location>
        <begin position="208"/>
        <end position="209"/>
    </location>
    <ligand>
        <name>NADP(+)</name>
        <dbReference type="ChEBI" id="CHEBI:58349"/>
    </ligand>
</feature>
<feature type="binding site" evidence="1">
    <location>
        <position position="220"/>
    </location>
    <ligand>
        <name>NADP(+)</name>
        <dbReference type="ChEBI" id="CHEBI:58349"/>
    </ligand>
</feature>
<feature type="binding site" evidence="1">
    <location>
        <position position="375"/>
    </location>
    <ligand>
        <name>FAD</name>
        <dbReference type="ChEBI" id="CHEBI:57692"/>
    </ligand>
</feature>
<feature type="binding site" evidence="1">
    <location>
        <begin position="382"/>
        <end position="384"/>
    </location>
    <ligand>
        <name>FAD</name>
        <dbReference type="ChEBI" id="CHEBI:57692"/>
    </ligand>
</feature>
<feature type="binding site" evidence="1">
    <location>
        <position position="382"/>
    </location>
    <ligand>
        <name>NADP(+)</name>
        <dbReference type="ChEBI" id="CHEBI:58349"/>
    </ligand>
</feature>
<evidence type="ECO:0000250" key="1">
    <source>
        <dbReference type="UniProtKB" id="P08165"/>
    </source>
</evidence>
<evidence type="ECO:0000250" key="2">
    <source>
        <dbReference type="UniProtKB" id="P48360"/>
    </source>
</evidence>
<evidence type="ECO:0000255" key="3"/>
<evidence type="ECO:0000305" key="4"/>
<reference key="1">
    <citation type="journal article" date="2002" name="Nature">
        <title>The genome sequence of Schizosaccharomyces pombe.</title>
        <authorList>
            <person name="Wood V."/>
            <person name="Gwilliam R."/>
            <person name="Rajandream M.A."/>
            <person name="Lyne M.H."/>
            <person name="Lyne R."/>
            <person name="Stewart A."/>
            <person name="Sgouros J.G."/>
            <person name="Peat N."/>
            <person name="Hayles J."/>
            <person name="Baker S.G."/>
            <person name="Basham D."/>
            <person name="Bowman S."/>
            <person name="Brooks K."/>
            <person name="Brown D."/>
            <person name="Brown S."/>
            <person name="Chillingworth T."/>
            <person name="Churcher C.M."/>
            <person name="Collins M."/>
            <person name="Connor R."/>
            <person name="Cronin A."/>
            <person name="Davis P."/>
            <person name="Feltwell T."/>
            <person name="Fraser A."/>
            <person name="Gentles S."/>
            <person name="Goble A."/>
            <person name="Hamlin N."/>
            <person name="Harris D.E."/>
            <person name="Hidalgo J."/>
            <person name="Hodgson G."/>
            <person name="Holroyd S."/>
            <person name="Hornsby T."/>
            <person name="Howarth S."/>
            <person name="Huckle E.J."/>
            <person name="Hunt S."/>
            <person name="Jagels K."/>
            <person name="James K.D."/>
            <person name="Jones L."/>
            <person name="Jones M."/>
            <person name="Leather S."/>
            <person name="McDonald S."/>
            <person name="McLean J."/>
            <person name="Mooney P."/>
            <person name="Moule S."/>
            <person name="Mungall K.L."/>
            <person name="Murphy L.D."/>
            <person name="Niblett D."/>
            <person name="Odell C."/>
            <person name="Oliver K."/>
            <person name="O'Neil S."/>
            <person name="Pearson D."/>
            <person name="Quail M.A."/>
            <person name="Rabbinowitsch E."/>
            <person name="Rutherford K.M."/>
            <person name="Rutter S."/>
            <person name="Saunders D."/>
            <person name="Seeger K."/>
            <person name="Sharp S."/>
            <person name="Skelton J."/>
            <person name="Simmonds M.N."/>
            <person name="Squares R."/>
            <person name="Squares S."/>
            <person name="Stevens K."/>
            <person name="Taylor K."/>
            <person name="Taylor R.G."/>
            <person name="Tivey A."/>
            <person name="Walsh S.V."/>
            <person name="Warren T."/>
            <person name="Whitehead S."/>
            <person name="Woodward J.R."/>
            <person name="Volckaert G."/>
            <person name="Aert R."/>
            <person name="Robben J."/>
            <person name="Grymonprez B."/>
            <person name="Weltjens I."/>
            <person name="Vanstreels E."/>
            <person name="Rieger M."/>
            <person name="Schaefer M."/>
            <person name="Mueller-Auer S."/>
            <person name="Gabel C."/>
            <person name="Fuchs M."/>
            <person name="Duesterhoeft A."/>
            <person name="Fritzc C."/>
            <person name="Holzer E."/>
            <person name="Moestl D."/>
            <person name="Hilbert H."/>
            <person name="Borzym K."/>
            <person name="Langer I."/>
            <person name="Beck A."/>
            <person name="Lehrach H."/>
            <person name="Reinhardt R."/>
            <person name="Pohl T.M."/>
            <person name="Eger P."/>
            <person name="Zimmermann W."/>
            <person name="Wedler H."/>
            <person name="Wambutt R."/>
            <person name="Purnelle B."/>
            <person name="Goffeau A."/>
            <person name="Cadieu E."/>
            <person name="Dreano S."/>
            <person name="Gloux S."/>
            <person name="Lelaure V."/>
            <person name="Mottier S."/>
            <person name="Galibert F."/>
            <person name="Aves S.J."/>
            <person name="Xiang Z."/>
            <person name="Hunt C."/>
            <person name="Moore K."/>
            <person name="Hurst S.M."/>
            <person name="Lucas M."/>
            <person name="Rochet M."/>
            <person name="Gaillardin C."/>
            <person name="Tallada V.A."/>
            <person name="Garzon A."/>
            <person name="Thode G."/>
            <person name="Daga R.R."/>
            <person name="Cruzado L."/>
            <person name="Jimenez J."/>
            <person name="Sanchez M."/>
            <person name="del Rey F."/>
            <person name="Benito J."/>
            <person name="Dominguez A."/>
            <person name="Revuelta J.L."/>
            <person name="Moreno S."/>
            <person name="Armstrong J."/>
            <person name="Forsburg S.L."/>
            <person name="Cerutti L."/>
            <person name="Lowe T."/>
            <person name="McCombie W.R."/>
            <person name="Paulsen I."/>
            <person name="Potashkin J."/>
            <person name="Shpakovski G.V."/>
            <person name="Ussery D."/>
            <person name="Barrell B.G."/>
            <person name="Nurse P."/>
        </authorList>
    </citation>
    <scope>NUCLEOTIDE SEQUENCE [LARGE SCALE GENOMIC DNA]</scope>
    <source>
        <strain>972 / ATCC 24843</strain>
    </source>
</reference>
<reference key="2">
    <citation type="journal article" date="2006" name="Nat. Biotechnol.">
        <title>ORFeome cloning and global analysis of protein localization in the fission yeast Schizosaccharomyces pombe.</title>
        <authorList>
            <person name="Matsuyama A."/>
            <person name="Arai R."/>
            <person name="Yashiroda Y."/>
            <person name="Shirai A."/>
            <person name="Kamata A."/>
            <person name="Sekido S."/>
            <person name="Kobayashi Y."/>
            <person name="Hashimoto A."/>
            <person name="Hamamoto M."/>
            <person name="Hiraoka Y."/>
            <person name="Horinouchi S."/>
            <person name="Yoshida M."/>
        </authorList>
    </citation>
    <scope>SUBCELLULAR LOCATION [LARGE SCALE ANALYSIS]</scope>
</reference>
<reference key="3">
    <citation type="journal article" date="2008" name="FEMS Yeast Res.">
        <title>The endogenous adrenodoxin reductase-like flavoprotein arh1 supports heterologous cytochrome P450-dependent substrate conversions in Schizosaccharomyces pombe.</title>
        <authorList>
            <person name="Ewen K.M."/>
            <person name="Schiffler B."/>
            <person name="Uhlmann-Schiffler H."/>
            <person name="Bernhardt R."/>
            <person name="Hannemann F."/>
        </authorList>
    </citation>
    <scope>FUNCTION</scope>
</reference>
<protein>
    <recommendedName>
        <fullName>Probable NADPH:adrenodoxin oxidoreductase, mitochondrial</fullName>
        <shortName>AR</shortName>
        <shortName>Adrenodoxin reductase</shortName>
        <ecNumber>1.18.1.6</ecNumber>
    </recommendedName>
    <alternativeName>
        <fullName>Ferredoxin--NADP(+) reductase</fullName>
        <shortName>Ferredoxin reductase</shortName>
    </alternativeName>
</protein>
<keyword id="KW-0249">Electron transport</keyword>
<keyword id="KW-0274">FAD</keyword>
<keyword id="KW-0285">Flavoprotein</keyword>
<keyword id="KW-0472">Membrane</keyword>
<keyword id="KW-0496">Mitochondrion</keyword>
<keyword id="KW-0999">Mitochondrion inner membrane</keyword>
<keyword id="KW-0521">NADP</keyword>
<keyword id="KW-0560">Oxidoreductase</keyword>
<keyword id="KW-1185">Reference proteome</keyword>
<keyword id="KW-0809">Transit peptide</keyword>
<keyword id="KW-0813">Transport</keyword>
<gene>
    <name type="primary">arh1</name>
    <name type="ORF">SPBC3B8.01c</name>
</gene>
<comment type="function">
    <text evidence="2">Adrenodoxin reductase transfers electrons from NADPH to adrenodoxin, which is involved in heme A biosynthesis and in iron-sulfur cluster assembly. Involved in the electron transfer to heme A synthase etp1(cd), a heme protein that catalyzes the conversion of heme O to heme A. Required for the de novo synthesis of Fe-S clusters on iron sulfur cluster assembly protein isu1. Involved in electron delivery for Fe-S cluster synthesis. Essential for coenzyme Q biosynthesis. May be involved in the electron transfer required for the hydroxylation reaction performed by coq6. May play a role in cellular and mitochondrial iron homeostasis.</text>
</comment>
<comment type="catalytic activity">
    <reaction evidence="2">
        <text>2 reduced [adrenodoxin] + NADP(+) + H(+) = 2 oxidized [adrenodoxin] + NADPH</text>
        <dbReference type="Rhea" id="RHEA:42312"/>
        <dbReference type="Rhea" id="RHEA-COMP:9998"/>
        <dbReference type="Rhea" id="RHEA-COMP:9999"/>
        <dbReference type="ChEBI" id="CHEBI:15378"/>
        <dbReference type="ChEBI" id="CHEBI:33737"/>
        <dbReference type="ChEBI" id="CHEBI:33738"/>
        <dbReference type="ChEBI" id="CHEBI:57783"/>
        <dbReference type="ChEBI" id="CHEBI:58349"/>
        <dbReference type="EC" id="1.18.1.6"/>
    </reaction>
</comment>
<comment type="cofactor">
    <cofactor evidence="1">
        <name>FAD</name>
        <dbReference type="ChEBI" id="CHEBI:57692"/>
    </cofactor>
</comment>
<comment type="subcellular location">
    <subcellularLocation>
        <location evidence="2">Mitochondrion inner membrane</location>
        <topology evidence="4">Peripheral membrane protein</topology>
    </subcellularLocation>
</comment>
<comment type="similarity">
    <text evidence="4">Belongs to the ferredoxin--NADP reductase type 1 family.</text>
</comment>
<accession>O59710</accession>
<dbReference type="EC" id="1.18.1.6"/>
<dbReference type="EMBL" id="CU329671">
    <property type="protein sequence ID" value="CAA18290.1"/>
    <property type="molecule type" value="Genomic_DNA"/>
</dbReference>
<dbReference type="PIR" id="T40339">
    <property type="entry name" value="T40339"/>
</dbReference>
<dbReference type="RefSeq" id="NP_596413.1">
    <property type="nucleotide sequence ID" value="NM_001022332.2"/>
</dbReference>
<dbReference type="SMR" id="O59710"/>
<dbReference type="FunCoup" id="O59710">
    <property type="interactions" value="493"/>
</dbReference>
<dbReference type="STRING" id="284812.O59710"/>
<dbReference type="SwissPalm" id="O59710"/>
<dbReference type="PaxDb" id="4896-SPBC3B8.01c.1"/>
<dbReference type="EnsemblFungi" id="SPBC3B8.01c.1">
    <property type="protein sequence ID" value="SPBC3B8.01c.1:pep"/>
    <property type="gene ID" value="SPBC3B8.01c"/>
</dbReference>
<dbReference type="GeneID" id="2541049"/>
<dbReference type="KEGG" id="spo:2541049"/>
<dbReference type="PomBase" id="SPBC3B8.01c">
    <property type="gene designation" value="arh1"/>
</dbReference>
<dbReference type="VEuPathDB" id="FungiDB:SPBC3B8.01c"/>
<dbReference type="eggNOG" id="KOG1800">
    <property type="taxonomic scope" value="Eukaryota"/>
</dbReference>
<dbReference type="HOGENOM" id="CLU_024722_3_1_1"/>
<dbReference type="InParanoid" id="O59710"/>
<dbReference type="OMA" id="RFNFIGN"/>
<dbReference type="PhylomeDB" id="O59710"/>
<dbReference type="Reactome" id="R-SPO-2395516">
    <property type="pathway name" value="Electron transport from NADPH to Ferredoxin"/>
</dbReference>
<dbReference type="PRO" id="PR:O59710"/>
<dbReference type="Proteomes" id="UP000002485">
    <property type="component" value="Chromosome II"/>
</dbReference>
<dbReference type="GO" id="GO:0099128">
    <property type="term" value="C:mitochondrial [2Fe-2S] assembly complex"/>
    <property type="evidence" value="ECO:0000304"/>
    <property type="project" value="PomBase"/>
</dbReference>
<dbReference type="GO" id="GO:0005743">
    <property type="term" value="C:mitochondrial inner membrane"/>
    <property type="evidence" value="ECO:0000266"/>
    <property type="project" value="PomBase"/>
</dbReference>
<dbReference type="GO" id="GO:0005739">
    <property type="term" value="C:mitochondrion"/>
    <property type="evidence" value="ECO:0007005"/>
    <property type="project" value="PomBase"/>
</dbReference>
<dbReference type="GO" id="GO:0071949">
    <property type="term" value="F:FAD binding"/>
    <property type="evidence" value="ECO:0000314"/>
    <property type="project" value="PomBase"/>
</dbReference>
<dbReference type="GO" id="GO:0008860">
    <property type="term" value="F:ferredoxin-NAD+ reductase activity"/>
    <property type="evidence" value="ECO:0000314"/>
    <property type="project" value="PomBase"/>
</dbReference>
<dbReference type="GO" id="GO:0004324">
    <property type="term" value="F:ferredoxin-NADP+ reductase activity"/>
    <property type="evidence" value="ECO:0000314"/>
    <property type="project" value="PomBase"/>
</dbReference>
<dbReference type="GO" id="GO:0004325">
    <property type="term" value="F:ferrochelatase activity"/>
    <property type="evidence" value="ECO:0000303"/>
    <property type="project" value="PomBase"/>
</dbReference>
<dbReference type="GO" id="GO:0016491">
    <property type="term" value="F:oxidoreductase activity"/>
    <property type="evidence" value="ECO:0000318"/>
    <property type="project" value="GO_Central"/>
</dbReference>
<dbReference type="GO" id="GO:0044571">
    <property type="term" value="P:[2Fe-2S] cluster assembly"/>
    <property type="evidence" value="ECO:0000305"/>
    <property type="project" value="PomBase"/>
</dbReference>
<dbReference type="Gene3D" id="3.50.50.60">
    <property type="entry name" value="FAD/NAD(P)-binding domain"/>
    <property type="match status" value="1"/>
</dbReference>
<dbReference type="Gene3D" id="3.40.50.720">
    <property type="entry name" value="NAD(P)-binding Rossmann-like Domain"/>
    <property type="match status" value="1"/>
</dbReference>
<dbReference type="InterPro" id="IPR036188">
    <property type="entry name" value="FAD/NAD-bd_sf"/>
</dbReference>
<dbReference type="InterPro" id="IPR023753">
    <property type="entry name" value="FAD/NAD-binding_dom"/>
</dbReference>
<dbReference type="InterPro" id="IPR055275">
    <property type="entry name" value="Ferredox_Rdtase"/>
</dbReference>
<dbReference type="InterPro" id="IPR021163">
    <property type="entry name" value="Ferredox_Rdtase_adrenod"/>
</dbReference>
<dbReference type="PANTHER" id="PTHR48467">
    <property type="entry name" value="GLUTAMATE SYNTHASE 1 [NADH], CHLOROPLASTIC-LIKE"/>
    <property type="match status" value="1"/>
</dbReference>
<dbReference type="PANTHER" id="PTHR48467:SF1">
    <property type="entry name" value="GLUTAMATE SYNTHASE 1 [NADH], CHLOROPLASTIC-LIKE"/>
    <property type="match status" value="1"/>
</dbReference>
<dbReference type="Pfam" id="PF07992">
    <property type="entry name" value="Pyr_redox_2"/>
    <property type="match status" value="1"/>
</dbReference>
<dbReference type="PIRSF" id="PIRSF000362">
    <property type="entry name" value="FNR"/>
    <property type="match status" value="1"/>
</dbReference>
<dbReference type="PRINTS" id="PR00419">
    <property type="entry name" value="ADXRDTASE"/>
</dbReference>
<dbReference type="SUPFAM" id="SSF51971">
    <property type="entry name" value="Nucleotide-binding domain"/>
    <property type="match status" value="1"/>
</dbReference>
<sequence length="469" mass="52716">MLSRFIKRTYSTQTSSPVVGIIGSGPAAFYTAHRLLRNDPNVKIDMFESRPVPFGLVRYGVAPDHPEVKHVEHKFSEIAESTQFRFLGNVNVGTDVSLRDLTKNYDCLVLAYGAAGDKRLGIPGEDLSGVYSAREVVGWYNSDPRNQNLELDLSQVEDAVVIGHGNVSLDVARILLSNPAQLSPTDINPLFLKSLERSNLKRLHIVGRRNIFSVSFTIKELRELFALSSAVFFAPSFNYSTKWMNETDASGLDRPRKRLLKLLVSEIQKAVSEKRVAPYSKDKKCWNLEFGLTPVEILGHKGNVENVRFQITDSIRTDAESKFTTIPAQLFIRSIGYKSMPLPGMKDVGVPFDDAKGIVKNVNGFVRPGIYTSGWVKHGPIGVIATTMMDAFATADTITKDWKSKKEFLKNSKLGWDGLKKNIKTPVIHWKDWKVIRNAEIERGLRHESLSEKFRSNEDMIKLIYPGKK</sequence>
<organism>
    <name type="scientific">Schizosaccharomyces pombe (strain 972 / ATCC 24843)</name>
    <name type="common">Fission yeast</name>
    <dbReference type="NCBI Taxonomy" id="284812"/>
    <lineage>
        <taxon>Eukaryota</taxon>
        <taxon>Fungi</taxon>
        <taxon>Dikarya</taxon>
        <taxon>Ascomycota</taxon>
        <taxon>Taphrinomycotina</taxon>
        <taxon>Schizosaccharomycetes</taxon>
        <taxon>Schizosaccharomycetales</taxon>
        <taxon>Schizosaccharomycetaceae</taxon>
        <taxon>Schizosaccharomyces</taxon>
    </lineage>
</organism>